<sequence>MQRHVFARNFRRLSLLRNPSLTKRFQSSASGAANTPNNNDEVMLLQQKLLYDEIRSELKSLSQVPEDEILPELKKSLEQDKLSDKEQQLEAELSDFFRNYALLNKLFDSKTLDGQSSTTTAAATPTKPYPNLIPSANDKPYSSQELFLRQLNHSMRTAKLGATISKVYYPHKDIFYPPLPENITVESLMSAGVHLGQSTSLWRSSTQSYIYGEYKGIHIIDLNQTLSYLKRAAKVVEGVSESGGIILFLGTRQGQKRGLEEAAKKTHGYYVSTRWIPGTLTNSTEISGIWEKQEIDSNDNPTERALSPNETSKQVKPDLLVVLNPTENRNALLEAIKSRVPTIAIIDTDSEPSLVTYPIPGNDDSLRSVNFLLGVLARAGQRGLQNRLARNNEK</sequence>
<evidence type="ECO:0000255" key="1"/>
<evidence type="ECO:0000269" key="2">
    <source>
    </source>
</evidence>
<evidence type="ECO:0000269" key="3">
    <source>
    </source>
</evidence>
<evidence type="ECO:0000269" key="4">
    <source>
    </source>
</evidence>
<evidence type="ECO:0000269" key="5">
    <source>
    </source>
</evidence>
<evidence type="ECO:0000269" key="6">
    <source>
    </source>
</evidence>
<evidence type="ECO:0000269" key="7">
    <source>
    </source>
</evidence>
<evidence type="ECO:0000269" key="8">
    <source>
    </source>
</evidence>
<evidence type="ECO:0000303" key="9">
    <source>
    </source>
</evidence>
<evidence type="ECO:0000305" key="10"/>
<evidence type="ECO:0000305" key="11">
    <source>
    </source>
</evidence>
<evidence type="ECO:0000305" key="12">
    <source>
    </source>
</evidence>
<evidence type="ECO:0007829" key="13">
    <source>
        <dbReference type="PDB" id="8D8K"/>
    </source>
</evidence>
<evidence type="ECO:0007829" key="14">
    <source>
        <dbReference type="PDB" id="8D8L"/>
    </source>
</evidence>
<proteinExistence type="evidence at protein level"/>
<name>RT04_YEAST</name>
<comment type="function">
    <text evidence="11 12">Component of the mitochondrial ribosome (mitoribosome), a dedicated translation machinery responsible for the synthesis of mitochondrial genome-encoded proteins, including at least some of the essential transmembrane subunits of the mitochondrial respiratory chain. The mitoribosomes are attached to the mitochondrial inner membrane and translation products are cotranslationally integrated into the membrane.</text>
</comment>
<comment type="subunit">
    <text evidence="2 3 8">Component of the mitochondrial small ribosomal subunit (mt-SSU). Mature yeast 74S mitochondrial ribosomes consist of a small (37S) and a large (54S) subunit. The 37S small subunit contains a 15S ribosomal RNA (15S mt-rRNA) and 34 different proteins. The 54S large subunit contains a 21S rRNA (21S mt-rRNA) and 46 different proteins.</text>
</comment>
<comment type="subcellular location">
    <subcellularLocation>
        <location evidence="4 6">Mitochondrion</location>
    </subcellularLocation>
    <text evidence="7">Mitoribosomes are tethered to the mitochondrial inner membrane and spatially aligned with the membrane insertion machinery through two distinct membrane contact sites, formed by the 21S rRNA expansion segment 96-ES1 and the inner membrane protein MBA1.</text>
</comment>
<comment type="miscellaneous">
    <text evidence="5">Present with 6890 molecules/cell in log phase SD medium.</text>
</comment>
<comment type="similarity">
    <text evidence="10">Belongs to the universal ribosomal protein uS2 family.</text>
</comment>
<keyword id="KW-0002">3D-structure</keyword>
<keyword id="KW-0496">Mitochondrion</keyword>
<keyword id="KW-1185">Reference proteome</keyword>
<keyword id="KW-0687">Ribonucleoprotein</keyword>
<keyword id="KW-0689">Ribosomal protein</keyword>
<keyword id="KW-0809">Transit peptide</keyword>
<protein>
    <recommendedName>
        <fullName evidence="9">Small ribosomal subunit protein uS2m</fullName>
    </recommendedName>
    <alternativeName>
        <fullName>37S ribosomal protein MRP4, mitochondrial</fullName>
    </alternativeName>
</protein>
<dbReference type="EMBL" id="M82841">
    <property type="protein sequence ID" value="AAA34793.1"/>
    <property type="molecule type" value="Genomic_DNA"/>
</dbReference>
<dbReference type="EMBL" id="U10555">
    <property type="protein sequence ID" value="AAB68428.1"/>
    <property type="molecule type" value="Genomic_DNA"/>
</dbReference>
<dbReference type="EMBL" id="AY558385">
    <property type="protein sequence ID" value="AAS56711.1"/>
    <property type="molecule type" value="Genomic_DNA"/>
</dbReference>
<dbReference type="EMBL" id="BK006934">
    <property type="protein sequence ID" value="DAA06683.1"/>
    <property type="molecule type" value="Genomic_DNA"/>
</dbReference>
<dbReference type="PIR" id="A42115">
    <property type="entry name" value="A42115"/>
</dbReference>
<dbReference type="RefSeq" id="NP_011859.1">
    <property type="nucleotide sequence ID" value="NM_001179084.1"/>
</dbReference>
<dbReference type="PDB" id="5MRC">
    <property type="method" value="EM"/>
    <property type="resolution" value="3.25 A"/>
    <property type="chains" value="BB=128-393"/>
</dbReference>
<dbReference type="PDB" id="5MRE">
    <property type="method" value="EM"/>
    <property type="resolution" value="3.75 A"/>
    <property type="chains" value="BB=128-393"/>
</dbReference>
<dbReference type="PDB" id="5MRF">
    <property type="method" value="EM"/>
    <property type="resolution" value="4.97 A"/>
    <property type="chains" value="BB=128-393"/>
</dbReference>
<dbReference type="PDB" id="8D8K">
    <property type="method" value="EM"/>
    <property type="resolution" value="3.13 A"/>
    <property type="chains" value="B=1-394"/>
</dbReference>
<dbReference type="PDB" id="8D8L">
    <property type="method" value="EM"/>
    <property type="resolution" value="2.60 A"/>
    <property type="chains" value="B=1-394"/>
</dbReference>
<dbReference type="PDB" id="8OM2">
    <property type="method" value="EM"/>
    <property type="resolution" value="2.57 A"/>
    <property type="chains" value="B=1-394"/>
</dbReference>
<dbReference type="PDB" id="8OM3">
    <property type="method" value="EM"/>
    <property type="resolution" value="2.87 A"/>
    <property type="chains" value="B=1-394"/>
</dbReference>
<dbReference type="PDB" id="8OM4">
    <property type="method" value="EM"/>
    <property type="resolution" value="2.32 A"/>
    <property type="chains" value="B=1-394"/>
</dbReference>
<dbReference type="PDBsum" id="5MRC"/>
<dbReference type="PDBsum" id="5MRE"/>
<dbReference type="PDBsum" id="5MRF"/>
<dbReference type="PDBsum" id="8D8K"/>
<dbReference type="PDBsum" id="8D8L"/>
<dbReference type="PDBsum" id="8OM2"/>
<dbReference type="PDBsum" id="8OM3"/>
<dbReference type="PDBsum" id="8OM4"/>
<dbReference type="EMDB" id="EMD-16966"/>
<dbReference type="EMDB" id="EMD-16967"/>
<dbReference type="EMDB" id="EMD-16968"/>
<dbReference type="EMDB" id="EMD-27250"/>
<dbReference type="EMDB" id="EMD-27251"/>
<dbReference type="EMDB" id="EMD-3551"/>
<dbReference type="EMDB" id="EMD-3552"/>
<dbReference type="EMDB" id="EMD-3553"/>
<dbReference type="SMR" id="P32902"/>
<dbReference type="BioGRID" id="36421">
    <property type="interactions" value="144"/>
</dbReference>
<dbReference type="ComplexPortal" id="CPX-1603">
    <property type="entry name" value="37S mitochondrial small ribosomal subunit"/>
</dbReference>
<dbReference type="DIP" id="DIP-5035N"/>
<dbReference type="FunCoup" id="P32902">
    <property type="interactions" value="992"/>
</dbReference>
<dbReference type="IntAct" id="P32902">
    <property type="interactions" value="80"/>
</dbReference>
<dbReference type="MINT" id="P32902"/>
<dbReference type="STRING" id="4932.YHL004W"/>
<dbReference type="PaxDb" id="4932-YHL004W"/>
<dbReference type="PeptideAtlas" id="P32902"/>
<dbReference type="EnsemblFungi" id="YHL004W_mRNA">
    <property type="protein sequence ID" value="YHL004W"/>
    <property type="gene ID" value="YHL004W"/>
</dbReference>
<dbReference type="GeneID" id="856384"/>
<dbReference type="KEGG" id="sce:YHL004W"/>
<dbReference type="AGR" id="SGD:S000000996"/>
<dbReference type="SGD" id="S000000996">
    <property type="gene designation" value="MRP4"/>
</dbReference>
<dbReference type="VEuPathDB" id="FungiDB:YHL004W"/>
<dbReference type="eggNOG" id="KOG0832">
    <property type="taxonomic scope" value="Eukaryota"/>
</dbReference>
<dbReference type="GeneTree" id="ENSGT00390000017382"/>
<dbReference type="HOGENOM" id="CLU_040318_4_3_1"/>
<dbReference type="InParanoid" id="P32902"/>
<dbReference type="OMA" id="RNCINEC"/>
<dbReference type="OrthoDB" id="2320368at2759"/>
<dbReference type="BioCyc" id="YEAST:G3O-31027-MONOMER"/>
<dbReference type="Reactome" id="R-SCE-9837999">
    <property type="pathway name" value="Mitochondrial protein degradation"/>
</dbReference>
<dbReference type="BioGRID-ORCS" id="856384">
    <property type="hits" value="1 hit in 10 CRISPR screens"/>
</dbReference>
<dbReference type="PRO" id="PR:P32902"/>
<dbReference type="Proteomes" id="UP000002311">
    <property type="component" value="Chromosome VIII"/>
</dbReference>
<dbReference type="RNAct" id="P32902">
    <property type="molecule type" value="protein"/>
</dbReference>
<dbReference type="GO" id="GO:0005743">
    <property type="term" value="C:mitochondrial inner membrane"/>
    <property type="evidence" value="ECO:0000303"/>
    <property type="project" value="ComplexPortal"/>
</dbReference>
<dbReference type="GO" id="GO:0005763">
    <property type="term" value="C:mitochondrial small ribosomal subunit"/>
    <property type="evidence" value="ECO:0000314"/>
    <property type="project" value="SGD"/>
</dbReference>
<dbReference type="GO" id="GO:0005739">
    <property type="term" value="C:mitochondrion"/>
    <property type="evidence" value="ECO:0007005"/>
    <property type="project" value="SGD"/>
</dbReference>
<dbReference type="GO" id="GO:0003735">
    <property type="term" value="F:structural constituent of ribosome"/>
    <property type="evidence" value="ECO:0000314"/>
    <property type="project" value="SGD"/>
</dbReference>
<dbReference type="GO" id="GO:0032543">
    <property type="term" value="P:mitochondrial translation"/>
    <property type="evidence" value="ECO:0000303"/>
    <property type="project" value="ComplexPortal"/>
</dbReference>
<dbReference type="CDD" id="cd01425">
    <property type="entry name" value="RPS2"/>
    <property type="match status" value="1"/>
</dbReference>
<dbReference type="FunFam" id="3.40.50.10490:FF:000055">
    <property type="entry name" value="Mitochondrial ribosomal protein"/>
    <property type="match status" value="1"/>
</dbReference>
<dbReference type="Gene3D" id="3.40.50.10490">
    <property type="entry name" value="Glucose-6-phosphate isomerase like protein, domain 1"/>
    <property type="match status" value="1"/>
</dbReference>
<dbReference type="HAMAP" id="MF_00291_B">
    <property type="entry name" value="Ribosomal_uS2_B"/>
    <property type="match status" value="1"/>
</dbReference>
<dbReference type="InterPro" id="IPR001865">
    <property type="entry name" value="Ribosomal_uS2"/>
</dbReference>
<dbReference type="InterPro" id="IPR005706">
    <property type="entry name" value="Ribosomal_uS2_bac/mit/plastid"/>
</dbReference>
<dbReference type="InterPro" id="IPR018130">
    <property type="entry name" value="Ribosomal_uS2_CS"/>
</dbReference>
<dbReference type="InterPro" id="IPR023591">
    <property type="entry name" value="Ribosomal_uS2_flav_dom_sf"/>
</dbReference>
<dbReference type="NCBIfam" id="TIGR01011">
    <property type="entry name" value="rpsB_bact"/>
    <property type="match status" value="1"/>
</dbReference>
<dbReference type="PANTHER" id="PTHR12534">
    <property type="entry name" value="30S RIBOSOMAL PROTEIN S2 PROKARYOTIC AND ORGANELLAR"/>
    <property type="match status" value="1"/>
</dbReference>
<dbReference type="PANTHER" id="PTHR12534:SF0">
    <property type="entry name" value="SMALL RIBOSOMAL SUBUNIT PROTEIN US2M"/>
    <property type="match status" value="1"/>
</dbReference>
<dbReference type="Pfam" id="PF00318">
    <property type="entry name" value="Ribosomal_S2"/>
    <property type="match status" value="1"/>
</dbReference>
<dbReference type="PRINTS" id="PR00395">
    <property type="entry name" value="RIBOSOMALS2"/>
</dbReference>
<dbReference type="SUPFAM" id="SSF52313">
    <property type="entry name" value="Ribosomal protein S2"/>
    <property type="match status" value="1"/>
</dbReference>
<dbReference type="PROSITE" id="PS00962">
    <property type="entry name" value="RIBOSOMAL_S2_1"/>
    <property type="match status" value="1"/>
</dbReference>
<dbReference type="PROSITE" id="PS00963">
    <property type="entry name" value="RIBOSOMAL_S2_2"/>
    <property type="match status" value="1"/>
</dbReference>
<gene>
    <name type="primary">MRP4</name>
    <name type="synonym">MRP4A</name>
    <name type="ordered locus">YHL004W</name>
</gene>
<accession>P32902</accession>
<accession>D3DKR0</accession>
<reference key="1">
    <citation type="journal article" date="1992" name="J. Biol. Chem.">
        <title>Characterization of a yeast mitochondrial ribosomal protein structurally related to the mammalian 68-kDa high affinity laminin receptor.</title>
        <authorList>
            <person name="Davis S.C."/>
            <person name="Tzagoloff A."/>
            <person name="Ellis S.R."/>
        </authorList>
    </citation>
    <scope>NUCLEOTIDE SEQUENCE [GENOMIC DNA]</scope>
</reference>
<reference key="2">
    <citation type="journal article" date="1994" name="Science">
        <title>Complete nucleotide sequence of Saccharomyces cerevisiae chromosome VIII.</title>
        <authorList>
            <person name="Johnston M."/>
            <person name="Andrews S."/>
            <person name="Brinkman R."/>
            <person name="Cooper J."/>
            <person name="Ding H."/>
            <person name="Dover J."/>
            <person name="Du Z."/>
            <person name="Favello A."/>
            <person name="Fulton L."/>
            <person name="Gattung S."/>
            <person name="Geisel C."/>
            <person name="Kirsten J."/>
            <person name="Kucaba T."/>
            <person name="Hillier L.W."/>
            <person name="Jier M."/>
            <person name="Johnston L."/>
            <person name="Langston Y."/>
            <person name="Latreille P."/>
            <person name="Louis E.J."/>
            <person name="Macri C."/>
            <person name="Mardis E."/>
            <person name="Menezes S."/>
            <person name="Mouser L."/>
            <person name="Nhan M."/>
            <person name="Rifkin L."/>
            <person name="Riles L."/>
            <person name="St Peter H."/>
            <person name="Trevaskis E."/>
            <person name="Vaughan K."/>
            <person name="Vignati D."/>
            <person name="Wilcox L."/>
            <person name="Wohldman P."/>
            <person name="Waterston R."/>
            <person name="Wilson R."/>
            <person name="Vaudin M."/>
        </authorList>
    </citation>
    <scope>NUCLEOTIDE SEQUENCE [LARGE SCALE GENOMIC DNA]</scope>
    <source>
        <strain>ATCC 204508 / S288c</strain>
    </source>
</reference>
<reference key="3">
    <citation type="journal article" date="2014" name="G3 (Bethesda)">
        <title>The reference genome sequence of Saccharomyces cerevisiae: Then and now.</title>
        <authorList>
            <person name="Engel S.R."/>
            <person name="Dietrich F.S."/>
            <person name="Fisk D.G."/>
            <person name="Binkley G."/>
            <person name="Balakrishnan R."/>
            <person name="Costanzo M.C."/>
            <person name="Dwight S.S."/>
            <person name="Hitz B.C."/>
            <person name="Karra K."/>
            <person name="Nash R.S."/>
            <person name="Weng S."/>
            <person name="Wong E.D."/>
            <person name="Lloyd P."/>
            <person name="Skrzypek M.S."/>
            <person name="Miyasato S.R."/>
            <person name="Simison M."/>
            <person name="Cherry J.M."/>
        </authorList>
    </citation>
    <scope>GENOME REANNOTATION</scope>
    <source>
        <strain>ATCC 204508 / S288c</strain>
    </source>
</reference>
<reference key="4">
    <citation type="journal article" date="2007" name="Genome Res.">
        <title>Approaching a complete repository of sequence-verified protein-encoding clones for Saccharomyces cerevisiae.</title>
        <authorList>
            <person name="Hu Y."/>
            <person name="Rolfs A."/>
            <person name="Bhullar B."/>
            <person name="Murthy T.V.S."/>
            <person name="Zhu C."/>
            <person name="Berger M.F."/>
            <person name="Camargo A.A."/>
            <person name="Kelley F."/>
            <person name="McCarron S."/>
            <person name="Jepson D."/>
            <person name="Richardson A."/>
            <person name="Raphael J."/>
            <person name="Moreira D."/>
            <person name="Taycher E."/>
            <person name="Zuo D."/>
            <person name="Mohr S."/>
            <person name="Kane M.F."/>
            <person name="Williamson J."/>
            <person name="Simpson A.J.G."/>
            <person name="Bulyk M.L."/>
            <person name="Harlow E."/>
            <person name="Marsischky G."/>
            <person name="Kolodner R.D."/>
            <person name="LaBaer J."/>
        </authorList>
    </citation>
    <scope>NUCLEOTIDE SEQUENCE [GENOMIC DNA]</scope>
    <source>
        <strain>ATCC 204508 / S288c</strain>
    </source>
</reference>
<reference key="5">
    <citation type="journal article" date="2001" name="J. Biol. Chem.">
        <title>Identification of 12 new yeast mitochondrial ribosomal proteins including 6 that have no prokaryotic homologues.</title>
        <authorList>
            <person name="Saveanu C."/>
            <person name="Fromont-Racine M."/>
            <person name="Harington A."/>
            <person name="Ricard F."/>
            <person name="Namane A."/>
            <person name="Jacquier A."/>
        </authorList>
    </citation>
    <scope>IDENTIFICATION IN THE MITOCHONDRIAL RIBOSOMAL SMALL COMPLEX</scope>
    <scope>IDENTIFICATION BY MASS SPECTROMETRY</scope>
</reference>
<reference key="6">
    <citation type="journal article" date="2002" name="Eur. J. Biochem.">
        <title>Tag-mediated isolation of yeast mitochondrial ribosome and mass spectrometric identification of its new components.</title>
        <authorList>
            <person name="Gan X."/>
            <person name="Kitakawa M."/>
            <person name="Yoshino K."/>
            <person name="Oshiro N."/>
            <person name="Yonezawa K."/>
            <person name="Isono K."/>
        </authorList>
    </citation>
    <scope>IDENTIFICATION IN THE MITOCHONDRIAL RIBOSOMAL SMALL COMPLEX</scope>
    <scope>IDENTIFICATION BY MASS SPECTROMETRY</scope>
</reference>
<reference key="7">
    <citation type="journal article" date="2003" name="Nature">
        <title>Global analysis of protein localization in budding yeast.</title>
        <authorList>
            <person name="Huh W.-K."/>
            <person name="Falvo J.V."/>
            <person name="Gerke L.C."/>
            <person name="Carroll A.S."/>
            <person name="Howson R.W."/>
            <person name="Weissman J.S."/>
            <person name="O'Shea E.K."/>
        </authorList>
    </citation>
    <scope>SUBCELLULAR LOCATION [LARGE SCALE ANALYSIS]</scope>
</reference>
<reference key="8">
    <citation type="journal article" date="2003" name="Nature">
        <title>Global analysis of protein expression in yeast.</title>
        <authorList>
            <person name="Ghaemmaghami S."/>
            <person name="Huh W.-K."/>
            <person name="Bower K."/>
            <person name="Howson R.W."/>
            <person name="Belle A."/>
            <person name="Dephoure N."/>
            <person name="O'Shea E.K."/>
            <person name="Weissman J.S."/>
        </authorList>
    </citation>
    <scope>LEVEL OF PROTEIN EXPRESSION [LARGE SCALE ANALYSIS]</scope>
</reference>
<reference key="9">
    <citation type="journal article" date="2003" name="Proc. Natl. Acad. Sci. U.S.A.">
        <title>The proteome of Saccharomyces cerevisiae mitochondria.</title>
        <authorList>
            <person name="Sickmann A."/>
            <person name="Reinders J."/>
            <person name="Wagner Y."/>
            <person name="Joppich C."/>
            <person name="Zahedi R.P."/>
            <person name="Meyer H.E."/>
            <person name="Schoenfisch B."/>
            <person name="Perschil I."/>
            <person name="Chacinska A."/>
            <person name="Guiard B."/>
            <person name="Rehling P."/>
            <person name="Pfanner N."/>
            <person name="Meisinger C."/>
        </authorList>
    </citation>
    <scope>SUBCELLULAR LOCATION [LARGE SCALE ANALYSIS]</scope>
    <source>
        <strain>ATCC 76625 / YPH499</strain>
    </source>
</reference>
<reference key="10">
    <citation type="journal article" date="2015" name="Nat. Commun.">
        <title>Organization of the mitochondrial translation machinery studied in situ by cryoelectron tomography.</title>
        <authorList>
            <person name="Pfeffer S."/>
            <person name="Woellhaf M.W."/>
            <person name="Herrmann J.M."/>
            <person name="Forster F."/>
        </authorList>
    </citation>
    <scope>SUBCELLULAR LOCATION</scope>
</reference>
<reference key="11">
    <citation type="journal article" date="2017" name="Science">
        <title>The structure of the yeast mitochondrial ribosome.</title>
        <authorList>
            <person name="Desai N."/>
            <person name="Brown A."/>
            <person name="Amunts A."/>
            <person name="Ramakrishnan V."/>
        </authorList>
    </citation>
    <scope>STRUCTURE BY ELECTRON MICROSCOPY (3.25 ANGSTROMS)</scope>
    <scope>SUBUNIT</scope>
</reference>
<organism>
    <name type="scientific">Saccharomyces cerevisiae (strain ATCC 204508 / S288c)</name>
    <name type="common">Baker's yeast</name>
    <dbReference type="NCBI Taxonomy" id="559292"/>
    <lineage>
        <taxon>Eukaryota</taxon>
        <taxon>Fungi</taxon>
        <taxon>Dikarya</taxon>
        <taxon>Ascomycota</taxon>
        <taxon>Saccharomycotina</taxon>
        <taxon>Saccharomycetes</taxon>
        <taxon>Saccharomycetales</taxon>
        <taxon>Saccharomycetaceae</taxon>
        <taxon>Saccharomyces</taxon>
    </lineage>
</organism>
<feature type="transit peptide" description="Mitochondrion" evidence="1">
    <location>
        <begin position="1"/>
        <end position="25"/>
    </location>
</feature>
<feature type="chain" id="PRO_0000134345" description="Small ribosomal subunit protein uS2m">
    <location>
        <begin position="26"/>
        <end position="394"/>
    </location>
</feature>
<feature type="strand" evidence="13">
    <location>
        <begin position="137"/>
        <end position="139"/>
    </location>
</feature>
<feature type="helix" evidence="14">
    <location>
        <begin position="143"/>
        <end position="156"/>
    </location>
</feature>
<feature type="turn" evidence="14">
    <location>
        <begin position="157"/>
        <end position="159"/>
    </location>
</feature>
<feature type="helix" evidence="14">
    <location>
        <begin position="172"/>
        <end position="175"/>
    </location>
</feature>
<feature type="helix" evidence="14">
    <location>
        <begin position="180"/>
        <end position="182"/>
    </location>
</feature>
<feature type="helix" evidence="14">
    <location>
        <begin position="185"/>
        <end position="190"/>
    </location>
</feature>
<feature type="turn" evidence="14">
    <location>
        <begin position="191"/>
        <end position="194"/>
    </location>
</feature>
<feature type="strand" evidence="14">
    <location>
        <begin position="195"/>
        <end position="198"/>
    </location>
</feature>
<feature type="helix" evidence="14">
    <location>
        <begin position="199"/>
        <end position="201"/>
    </location>
</feature>
<feature type="helix" evidence="14">
    <location>
        <begin position="204"/>
        <end position="209"/>
    </location>
</feature>
<feature type="strand" evidence="14">
    <location>
        <begin position="210"/>
        <end position="214"/>
    </location>
</feature>
<feature type="strand" evidence="14">
    <location>
        <begin position="217"/>
        <end position="220"/>
    </location>
</feature>
<feature type="helix" evidence="14">
    <location>
        <begin position="222"/>
        <end position="241"/>
    </location>
</feature>
<feature type="strand" evidence="14">
    <location>
        <begin position="246"/>
        <end position="249"/>
    </location>
</feature>
<feature type="helix" evidence="14">
    <location>
        <begin position="256"/>
        <end position="266"/>
    </location>
</feature>
<feature type="strand" evidence="14">
    <location>
        <begin position="269"/>
        <end position="271"/>
    </location>
</feature>
<feature type="turn" evidence="14">
    <location>
        <begin position="277"/>
        <end position="282"/>
    </location>
</feature>
<feature type="helix" evidence="14">
    <location>
        <begin position="283"/>
        <end position="286"/>
    </location>
</feature>
<feature type="strand" evidence="14">
    <location>
        <begin position="288"/>
        <end position="290"/>
    </location>
</feature>
<feature type="strand" evidence="14">
    <location>
        <begin position="292"/>
        <end position="295"/>
    </location>
</feature>
<feature type="helix" evidence="14">
    <location>
        <begin position="308"/>
        <end position="312"/>
    </location>
</feature>
<feature type="strand" evidence="14">
    <location>
        <begin position="318"/>
        <end position="323"/>
    </location>
</feature>
<feature type="helix" evidence="14">
    <location>
        <begin position="325"/>
        <end position="327"/>
    </location>
</feature>
<feature type="helix" evidence="14">
    <location>
        <begin position="329"/>
        <end position="338"/>
    </location>
</feature>
<feature type="strand" evidence="14">
    <location>
        <begin position="342"/>
        <end position="346"/>
    </location>
</feature>
<feature type="helix" evidence="14">
    <location>
        <begin position="352"/>
        <end position="354"/>
    </location>
</feature>
<feature type="strand" evidence="14">
    <location>
        <begin position="355"/>
        <end position="361"/>
    </location>
</feature>
<feature type="strand" evidence="13">
    <location>
        <begin position="363"/>
        <end position="365"/>
    </location>
</feature>
<feature type="helix" evidence="14">
    <location>
        <begin position="366"/>
        <end position="391"/>
    </location>
</feature>